<reference key="1">
    <citation type="journal article" date="2003" name="Lancet">
        <title>Sequencing and analysis of the genome of the Whipple's disease bacterium Tropheryma whipplei.</title>
        <authorList>
            <person name="Bentley S.D."/>
            <person name="Maiwald M."/>
            <person name="Murphy L.D."/>
            <person name="Pallen M.J."/>
            <person name="Yeats C.A."/>
            <person name="Dover L.G."/>
            <person name="Norbertczak H.T."/>
            <person name="Besra G.S."/>
            <person name="Quail M.A."/>
            <person name="Harris D.E."/>
            <person name="von Herbay A."/>
            <person name="Goble A."/>
            <person name="Rutter S."/>
            <person name="Squares R."/>
            <person name="Squares S."/>
            <person name="Barrell B.G."/>
            <person name="Parkhill J."/>
            <person name="Relman D.A."/>
        </authorList>
    </citation>
    <scope>NUCLEOTIDE SEQUENCE [LARGE SCALE GENOMIC DNA]</scope>
    <source>
        <strain>TW08/27</strain>
    </source>
</reference>
<dbReference type="EMBL" id="BX251412">
    <property type="protein sequence ID" value="CAD67387.1"/>
    <property type="molecule type" value="Genomic_DNA"/>
</dbReference>
<dbReference type="RefSeq" id="WP_011096665.1">
    <property type="nucleotide sequence ID" value="NC_004551.1"/>
</dbReference>
<dbReference type="SMR" id="Q83HB2"/>
<dbReference type="GeneID" id="67388505"/>
<dbReference type="KEGG" id="tws:TW728"/>
<dbReference type="HOGENOM" id="CLU_086499_3_0_11"/>
<dbReference type="GO" id="GO:0022625">
    <property type="term" value="C:cytosolic large ribosomal subunit"/>
    <property type="evidence" value="ECO:0007669"/>
    <property type="project" value="TreeGrafter"/>
</dbReference>
<dbReference type="GO" id="GO:0003729">
    <property type="term" value="F:mRNA binding"/>
    <property type="evidence" value="ECO:0007669"/>
    <property type="project" value="TreeGrafter"/>
</dbReference>
<dbReference type="GO" id="GO:0003735">
    <property type="term" value="F:structural constituent of ribosome"/>
    <property type="evidence" value="ECO:0007669"/>
    <property type="project" value="InterPro"/>
</dbReference>
<dbReference type="GO" id="GO:0006412">
    <property type="term" value="P:translation"/>
    <property type="evidence" value="ECO:0007669"/>
    <property type="project" value="UniProtKB-UniRule"/>
</dbReference>
<dbReference type="CDD" id="cd00387">
    <property type="entry name" value="Ribosomal_L7_L12"/>
    <property type="match status" value="1"/>
</dbReference>
<dbReference type="FunFam" id="3.30.1390.10:FF:000001">
    <property type="entry name" value="50S ribosomal protein L7/L12"/>
    <property type="match status" value="1"/>
</dbReference>
<dbReference type="Gene3D" id="3.30.1390.10">
    <property type="match status" value="1"/>
</dbReference>
<dbReference type="Gene3D" id="1.20.5.710">
    <property type="entry name" value="Single helix bin"/>
    <property type="match status" value="1"/>
</dbReference>
<dbReference type="HAMAP" id="MF_00368">
    <property type="entry name" value="Ribosomal_bL12"/>
    <property type="match status" value="1"/>
</dbReference>
<dbReference type="InterPro" id="IPR000206">
    <property type="entry name" value="Ribosomal_bL12"/>
</dbReference>
<dbReference type="InterPro" id="IPR013823">
    <property type="entry name" value="Ribosomal_bL12_C"/>
</dbReference>
<dbReference type="InterPro" id="IPR014719">
    <property type="entry name" value="Ribosomal_bL12_C/ClpS-like"/>
</dbReference>
<dbReference type="InterPro" id="IPR008932">
    <property type="entry name" value="Ribosomal_bL12_oligo"/>
</dbReference>
<dbReference type="InterPro" id="IPR036235">
    <property type="entry name" value="Ribosomal_bL12_oligo_N_sf"/>
</dbReference>
<dbReference type="NCBIfam" id="TIGR00855">
    <property type="entry name" value="L12"/>
    <property type="match status" value="1"/>
</dbReference>
<dbReference type="PANTHER" id="PTHR45987">
    <property type="entry name" value="39S RIBOSOMAL PROTEIN L12"/>
    <property type="match status" value="1"/>
</dbReference>
<dbReference type="PANTHER" id="PTHR45987:SF4">
    <property type="entry name" value="LARGE RIBOSOMAL SUBUNIT PROTEIN BL12M"/>
    <property type="match status" value="1"/>
</dbReference>
<dbReference type="Pfam" id="PF00542">
    <property type="entry name" value="Ribosomal_L12"/>
    <property type="match status" value="1"/>
</dbReference>
<dbReference type="Pfam" id="PF16320">
    <property type="entry name" value="Ribosomal_L12_N"/>
    <property type="match status" value="1"/>
</dbReference>
<dbReference type="SUPFAM" id="SSF54736">
    <property type="entry name" value="ClpS-like"/>
    <property type="match status" value="1"/>
</dbReference>
<dbReference type="SUPFAM" id="SSF48300">
    <property type="entry name" value="Ribosomal protein L7/12, oligomerisation (N-terminal) domain"/>
    <property type="match status" value="1"/>
</dbReference>
<evidence type="ECO:0000255" key="1">
    <source>
        <dbReference type="HAMAP-Rule" id="MF_00368"/>
    </source>
</evidence>
<evidence type="ECO:0000305" key="2"/>
<accession>Q83HB2</accession>
<organism>
    <name type="scientific">Tropheryma whipplei (strain TW08/27)</name>
    <name type="common">Whipple's bacillus</name>
    <dbReference type="NCBI Taxonomy" id="218496"/>
    <lineage>
        <taxon>Bacteria</taxon>
        <taxon>Bacillati</taxon>
        <taxon>Actinomycetota</taxon>
        <taxon>Actinomycetes</taxon>
        <taxon>Micrococcales</taxon>
        <taxon>Tropherymataceae</taxon>
        <taxon>Tropheryma</taxon>
    </lineage>
</organism>
<feature type="chain" id="PRO_0000243523" description="Large ribosomal subunit protein bL12">
    <location>
        <begin position="1"/>
        <end position="126"/>
    </location>
</feature>
<keyword id="KW-0687">Ribonucleoprotein</keyword>
<keyword id="KW-0689">Ribosomal protein</keyword>
<gene>
    <name evidence="1" type="primary">rplL</name>
    <name type="ordered locus">TW728</name>
</gene>
<comment type="function">
    <text evidence="1">Forms part of the ribosomal stalk which helps the ribosome interact with GTP-bound translation factors. Is thus essential for accurate translation.</text>
</comment>
<comment type="subunit">
    <text evidence="1">Homodimer. Part of the ribosomal stalk of the 50S ribosomal subunit. Forms a multimeric L10(L12)X complex, where L10 forms an elongated spine to which 2 to 4 L12 dimers bind in a sequential fashion. Binds GTP-bound translation factors.</text>
</comment>
<comment type="similarity">
    <text evidence="1">Belongs to the bacterial ribosomal protein bL12 family.</text>
</comment>
<protein>
    <recommendedName>
        <fullName evidence="1">Large ribosomal subunit protein bL12</fullName>
    </recommendedName>
    <alternativeName>
        <fullName evidence="2">50S ribosomal protein L7/L12</fullName>
    </alternativeName>
</protein>
<proteinExistence type="inferred from homology"/>
<name>RL7_TROW8</name>
<sequence>MAKITTDELIESFKEMTLIELSEFVSKFEEVFKVTAAAPVAAAAAPIEPAAEAAPEKTTFDVILEAAGDKKIQVIKEVRTITGLGLGEAKALVDGVPSKVLEGANKDAADAAKAQLEAAGAQVSVK</sequence>